<dbReference type="EMBL" id="X58451">
    <property type="protein sequence ID" value="CAA41357.1"/>
    <property type="molecule type" value="Genomic_DNA"/>
</dbReference>
<dbReference type="EMBL" id="J01023">
    <property type="status" value="NOT_ANNOTATED_CDS"/>
    <property type="molecule type" value="mRNA"/>
</dbReference>
<dbReference type="PIR" id="A19318">
    <property type="entry name" value="A19318"/>
</dbReference>
<dbReference type="PIR" id="S24297">
    <property type="entry name" value="S24297"/>
</dbReference>
<dbReference type="RefSeq" id="NP_001112382.1">
    <property type="nucleotide sequence ID" value="NM_001118910.1"/>
</dbReference>
<dbReference type="GeneID" id="101740388"/>
<dbReference type="KEGG" id="bmor:101740388"/>
<dbReference type="InParanoid" id="Q17217"/>
<dbReference type="Proteomes" id="UP000005204">
    <property type="component" value="Unassembled WGS sequence"/>
</dbReference>
<dbReference type="GO" id="GO:0042600">
    <property type="term" value="C:egg chorion"/>
    <property type="evidence" value="ECO:0007669"/>
    <property type="project" value="InterPro"/>
</dbReference>
<dbReference type="GO" id="GO:0005213">
    <property type="term" value="F:structural constituent of egg chorion"/>
    <property type="evidence" value="ECO:0007669"/>
    <property type="project" value="InterPro"/>
</dbReference>
<dbReference type="GO" id="GO:0007304">
    <property type="term" value="P:chorion-containing eggshell formation"/>
    <property type="evidence" value="ECO:0000314"/>
    <property type="project" value="UniProtKB"/>
</dbReference>
<dbReference type="InterPro" id="IPR002635">
    <property type="entry name" value="Chorion"/>
</dbReference>
<dbReference type="Pfam" id="PF01723">
    <property type="entry name" value="Chorion_1"/>
    <property type="match status" value="1"/>
</dbReference>
<accession>Q17217</accession>
<accession>Q99236</accession>
<protein>
    <recommendedName>
        <fullName evidence="4">Chorion class B protein ERB4</fullName>
    </recommendedName>
    <alternativeName>
        <fullName evidence="5">Chorion class B protein 6A2</fullName>
    </alternativeName>
</protein>
<sequence length="194" mass="18610">MSSNVIVLCVSALFIQCAVSQCVGRIGSLRGGPFDGWGYDGLGYDGFGIGGWNGRGCGGLGDDIAAAAALGASHGGTLAVVSTSAAPTGLGIASENVYEGSVGVCGNLPFLGTADVAGEFPTAGLGGIDYTCGDGAVGITVENAINGISNVGYGLAPGIVGPAVAAPALGYGPGISSLGYNTAGRGCGCGANYY</sequence>
<evidence type="ECO:0000255" key="1"/>
<evidence type="ECO:0000269" key="2">
    <source>
    </source>
</evidence>
<evidence type="ECO:0000269" key="3">
    <source>
    </source>
</evidence>
<evidence type="ECO:0000303" key="4">
    <source>
    </source>
</evidence>
<evidence type="ECO:0000303" key="5">
    <source>
    </source>
</evidence>
<evidence type="ECO:0000305" key="6"/>
<evidence type="ECO:0000312" key="7">
    <source>
        <dbReference type="EMBL" id="CAA41357.1"/>
    </source>
</evidence>
<gene>
    <name evidence="7" type="primary">ErB.4</name>
</gene>
<organism>
    <name type="scientific">Bombyx mori</name>
    <name type="common">Silk moth</name>
    <dbReference type="NCBI Taxonomy" id="7091"/>
    <lineage>
        <taxon>Eukaryota</taxon>
        <taxon>Metazoa</taxon>
        <taxon>Ecdysozoa</taxon>
        <taxon>Arthropoda</taxon>
        <taxon>Hexapoda</taxon>
        <taxon>Insecta</taxon>
        <taxon>Pterygota</taxon>
        <taxon>Neoptera</taxon>
        <taxon>Endopterygota</taxon>
        <taxon>Lepidoptera</taxon>
        <taxon>Glossata</taxon>
        <taxon>Ditrysia</taxon>
        <taxon>Bombycoidea</taxon>
        <taxon>Bombycidae</taxon>
        <taxon>Bombycinae</taxon>
        <taxon>Bombyx</taxon>
    </lineage>
</organism>
<proteinExistence type="evidence at transcript level"/>
<comment type="function">
    <text evidence="3">This protein is one of many from the eggshell of the silk moth.</text>
</comment>
<comment type="developmental stage">
    <text evidence="2 3">Detected during early choriogenesis and is not detected after follicle 6. Maximum abundance in follicles 4 and 5.</text>
</comment>
<comment type="similarity">
    <text evidence="1">Belongs to the chorion protein family.</text>
</comment>
<keyword id="KW-1185">Reference proteome</keyword>
<keyword id="KW-0677">Repeat</keyword>
<keyword id="KW-0732">Signal</keyword>
<feature type="signal peptide" evidence="1 7">
    <location>
        <begin position="1"/>
        <end position="20"/>
    </location>
</feature>
<feature type="chain" id="PRO_5000145783" description="Chorion class B protein ERB4" evidence="2">
    <location>
        <begin position="21"/>
        <end position="194"/>
    </location>
</feature>
<feature type="region of interest" description="Left arm" evidence="3">
    <location>
        <begin position="22"/>
        <end position="72"/>
    </location>
</feature>
<feature type="region of interest" description="Central domain" evidence="3">
    <location>
        <begin position="73"/>
        <end position="128"/>
    </location>
</feature>
<feature type="region of interest" description="Right arm (Gly-rich tandem repeats)" evidence="3">
    <location>
        <begin position="129"/>
        <end position="194"/>
    </location>
</feature>
<feature type="sequence conflict" description="In Ref. 2; J01023." evidence="6" ref="2">
    <original>I</original>
    <variation>M</variation>
    <location>
        <position position="64"/>
    </location>
</feature>
<feature type="sequence conflict" description="In Ref. 2; J01023." evidence="6" ref="2">
    <location>
        <position position="69"/>
    </location>
</feature>
<feature type="sequence conflict" description="In Ref. 2; J01023." evidence="6" ref="2">
    <original>I</original>
    <variation>T</variation>
    <location>
        <position position="148"/>
    </location>
</feature>
<name>CHBE4_BOMMO</name>
<reference evidence="6 7" key="1">
    <citation type="journal article" date="1991" name="Genetics">
        <title>Sequence identity in an early chorion multigene family is the result of localized gene conversion.</title>
        <authorList>
            <person name="Hibner B.L."/>
            <person name="Burke W.D."/>
            <person name="Eickbush T.H."/>
        </authorList>
    </citation>
    <scope>NUCLEOTIDE SEQUENCE [GENOMIC DNA]</scope>
    <scope>DEVELOPMENTAL STAGE</scope>
    <source>
        <strain evidence="7">703</strain>
    </source>
</reference>
<reference evidence="6" key="2">
    <citation type="journal article" date="1983" name="Proc. Natl. Acad. Sci. U.S.A.">
        <title>Novel B family sequence from an early chorion cDNA library of Bombyx mori.</title>
        <authorList>
            <person name="Lecanidou R."/>
            <person name="Eickbush T.H."/>
            <person name="Rodakis G.C."/>
            <person name="Kafatos F.C."/>
        </authorList>
    </citation>
    <scope>NUCLEOTIDE SEQUENCE [MRNA] OF 1-148</scope>
    <scope>FUNCTION</scope>
    <scope>DEVELOPMENTAL STAGE</scope>
    <source>
        <tissue evidence="3">Choriogenic follicle</tissue>
    </source>
</reference>